<accession>Q9G2U7</accession>
<gene>
    <name type="primary">MT-CYB</name>
    <name type="synonym">COB</name>
    <name type="synonym">CYTB</name>
    <name type="synonym">MTCYB</name>
</gene>
<feature type="chain" id="PRO_0000061439" description="Cytochrome b">
    <location>
        <begin position="1"/>
        <end position="379"/>
    </location>
</feature>
<feature type="transmembrane region" description="Helical" evidence="2">
    <location>
        <begin position="33"/>
        <end position="53"/>
    </location>
</feature>
<feature type="transmembrane region" description="Helical" evidence="2">
    <location>
        <begin position="77"/>
        <end position="98"/>
    </location>
</feature>
<feature type="transmembrane region" description="Helical" evidence="2">
    <location>
        <begin position="113"/>
        <end position="133"/>
    </location>
</feature>
<feature type="transmembrane region" description="Helical" evidence="2">
    <location>
        <begin position="178"/>
        <end position="198"/>
    </location>
</feature>
<feature type="transmembrane region" description="Helical" evidence="2">
    <location>
        <begin position="226"/>
        <end position="246"/>
    </location>
</feature>
<feature type="transmembrane region" description="Helical" evidence="2">
    <location>
        <begin position="288"/>
        <end position="308"/>
    </location>
</feature>
<feature type="transmembrane region" description="Helical" evidence="2">
    <location>
        <begin position="320"/>
        <end position="340"/>
    </location>
</feature>
<feature type="transmembrane region" description="Helical" evidence="2">
    <location>
        <begin position="347"/>
        <end position="367"/>
    </location>
</feature>
<feature type="binding site" description="axial binding residue" evidence="2">
    <location>
        <position position="83"/>
    </location>
    <ligand>
        <name>heme b</name>
        <dbReference type="ChEBI" id="CHEBI:60344"/>
        <label>b562</label>
    </ligand>
    <ligandPart>
        <name>Fe</name>
        <dbReference type="ChEBI" id="CHEBI:18248"/>
    </ligandPart>
</feature>
<feature type="binding site" description="axial binding residue" evidence="2">
    <location>
        <position position="97"/>
    </location>
    <ligand>
        <name>heme b</name>
        <dbReference type="ChEBI" id="CHEBI:60344"/>
        <label>b566</label>
    </ligand>
    <ligandPart>
        <name>Fe</name>
        <dbReference type="ChEBI" id="CHEBI:18248"/>
    </ligandPart>
</feature>
<feature type="binding site" description="axial binding residue" evidence="2">
    <location>
        <position position="182"/>
    </location>
    <ligand>
        <name>heme b</name>
        <dbReference type="ChEBI" id="CHEBI:60344"/>
        <label>b562</label>
    </ligand>
    <ligandPart>
        <name>Fe</name>
        <dbReference type="ChEBI" id="CHEBI:18248"/>
    </ligandPart>
</feature>
<feature type="binding site" description="axial binding residue" evidence="2">
    <location>
        <position position="196"/>
    </location>
    <ligand>
        <name>heme b</name>
        <dbReference type="ChEBI" id="CHEBI:60344"/>
        <label>b566</label>
    </ligand>
    <ligandPart>
        <name>Fe</name>
        <dbReference type="ChEBI" id="CHEBI:18248"/>
    </ligandPart>
</feature>
<feature type="binding site" evidence="2">
    <location>
        <position position="201"/>
    </location>
    <ligand>
        <name>a ubiquinone</name>
        <dbReference type="ChEBI" id="CHEBI:16389"/>
    </ligand>
</feature>
<sequence>MTNLRKSHPLIKIINHSFIDLPTPSNISTWWNFGSLLGVCLILQIITGLFLAMHYTADTTTAFSSVTHICRDVNYGWLIRHAHANGASMFFIFLYFHIGRGIYYGSYTFMETWNIGVILSFAVMATAFMGYVLPWGQMSFWGATVITNLLSAIPYIGPSLVEWIWGGFSVDKATLTRFFAFHFVLPFIITAMVMIHLLFLHETGSNNPSGLNSDSDKIPFHPYYTIKDILGLLFMLMTLMMLILFSPDLLGDPDNYTPANPLNTPPHIKPEWYFLFAYAILRSIPNKLGGVLALVFSILILMLFPALHMSKQRTMTFRPLSQCLLWVLVANLIILTWIGGQPVEYPFITIGQLASISYFCIILILMPTTSLMENKLLKW</sequence>
<proteinExistence type="inferred from homology"/>
<keyword id="KW-0249">Electron transport</keyword>
<keyword id="KW-0349">Heme</keyword>
<keyword id="KW-0408">Iron</keyword>
<keyword id="KW-0472">Membrane</keyword>
<keyword id="KW-0479">Metal-binding</keyword>
<keyword id="KW-0496">Mitochondrion</keyword>
<keyword id="KW-0999">Mitochondrion inner membrane</keyword>
<keyword id="KW-0679">Respiratory chain</keyword>
<keyword id="KW-0812">Transmembrane</keyword>
<keyword id="KW-1133">Transmembrane helix</keyword>
<keyword id="KW-0813">Transport</keyword>
<keyword id="KW-0830">Ubiquinone</keyword>
<geneLocation type="mitochondrion"/>
<name>CYB_PROGY</name>
<reference key="1">
    <citation type="journal article" date="2000" name="Biochem. Syst. Ecol.">
        <title>Molecular characterization and mitochondrial sequence variation in two sympatric species of Proechimys (Rodentia: Echimyidae) in French Guiana.</title>
        <authorList>
            <person name="Steiner C."/>
            <person name="Sourrouille P."/>
            <person name="Catzeflis F."/>
        </authorList>
    </citation>
    <scope>NUCLEOTIDE SEQUENCE [GENOMIC DNA]</scope>
    <source>
        <strain>Isolate T-2010 / V-939</strain>
    </source>
</reference>
<organism>
    <name type="scientific">Proechimys guyannensis</name>
    <name type="common">Cayenne spiny rat</name>
    <name type="synonym">Proechimys cayennensis</name>
    <dbReference type="NCBI Taxonomy" id="128105"/>
    <lineage>
        <taxon>Eukaryota</taxon>
        <taxon>Metazoa</taxon>
        <taxon>Chordata</taxon>
        <taxon>Craniata</taxon>
        <taxon>Vertebrata</taxon>
        <taxon>Euteleostomi</taxon>
        <taxon>Mammalia</taxon>
        <taxon>Eutheria</taxon>
        <taxon>Euarchontoglires</taxon>
        <taxon>Glires</taxon>
        <taxon>Rodentia</taxon>
        <taxon>Hystricomorpha</taxon>
        <taxon>Echimyidae</taxon>
        <taxon>Proechimys</taxon>
    </lineage>
</organism>
<dbReference type="EMBL" id="AJ251398">
    <property type="protein sequence ID" value="CAC17738.1"/>
    <property type="molecule type" value="Genomic_DNA"/>
</dbReference>
<dbReference type="SMR" id="Q9G2U7"/>
<dbReference type="GO" id="GO:0005743">
    <property type="term" value="C:mitochondrial inner membrane"/>
    <property type="evidence" value="ECO:0007669"/>
    <property type="project" value="UniProtKB-SubCell"/>
</dbReference>
<dbReference type="GO" id="GO:0045275">
    <property type="term" value="C:respiratory chain complex III"/>
    <property type="evidence" value="ECO:0007669"/>
    <property type="project" value="InterPro"/>
</dbReference>
<dbReference type="GO" id="GO:0046872">
    <property type="term" value="F:metal ion binding"/>
    <property type="evidence" value="ECO:0007669"/>
    <property type="project" value="UniProtKB-KW"/>
</dbReference>
<dbReference type="GO" id="GO:0008121">
    <property type="term" value="F:ubiquinol-cytochrome-c reductase activity"/>
    <property type="evidence" value="ECO:0007669"/>
    <property type="project" value="InterPro"/>
</dbReference>
<dbReference type="GO" id="GO:0006122">
    <property type="term" value="P:mitochondrial electron transport, ubiquinol to cytochrome c"/>
    <property type="evidence" value="ECO:0007669"/>
    <property type="project" value="TreeGrafter"/>
</dbReference>
<dbReference type="CDD" id="cd00290">
    <property type="entry name" value="cytochrome_b_C"/>
    <property type="match status" value="1"/>
</dbReference>
<dbReference type="CDD" id="cd00284">
    <property type="entry name" value="Cytochrome_b_N"/>
    <property type="match status" value="1"/>
</dbReference>
<dbReference type="FunFam" id="1.20.810.10:FF:000002">
    <property type="entry name" value="Cytochrome b"/>
    <property type="match status" value="1"/>
</dbReference>
<dbReference type="Gene3D" id="1.20.810.10">
    <property type="entry name" value="Cytochrome Bc1 Complex, Chain C"/>
    <property type="match status" value="1"/>
</dbReference>
<dbReference type="InterPro" id="IPR005798">
    <property type="entry name" value="Cyt_b/b6_C"/>
</dbReference>
<dbReference type="InterPro" id="IPR036150">
    <property type="entry name" value="Cyt_b/b6_C_sf"/>
</dbReference>
<dbReference type="InterPro" id="IPR005797">
    <property type="entry name" value="Cyt_b/b6_N"/>
</dbReference>
<dbReference type="InterPro" id="IPR027387">
    <property type="entry name" value="Cytb/b6-like_sf"/>
</dbReference>
<dbReference type="InterPro" id="IPR030689">
    <property type="entry name" value="Cytochrome_b"/>
</dbReference>
<dbReference type="InterPro" id="IPR048260">
    <property type="entry name" value="Cytochrome_b_C_euk/bac"/>
</dbReference>
<dbReference type="InterPro" id="IPR048259">
    <property type="entry name" value="Cytochrome_b_N_euk/bac"/>
</dbReference>
<dbReference type="InterPro" id="IPR016174">
    <property type="entry name" value="Di-haem_cyt_TM"/>
</dbReference>
<dbReference type="PANTHER" id="PTHR19271">
    <property type="entry name" value="CYTOCHROME B"/>
    <property type="match status" value="1"/>
</dbReference>
<dbReference type="PANTHER" id="PTHR19271:SF16">
    <property type="entry name" value="CYTOCHROME B"/>
    <property type="match status" value="1"/>
</dbReference>
<dbReference type="Pfam" id="PF00032">
    <property type="entry name" value="Cytochrom_B_C"/>
    <property type="match status" value="1"/>
</dbReference>
<dbReference type="Pfam" id="PF00033">
    <property type="entry name" value="Cytochrome_B"/>
    <property type="match status" value="1"/>
</dbReference>
<dbReference type="PIRSF" id="PIRSF038885">
    <property type="entry name" value="COB"/>
    <property type="match status" value="1"/>
</dbReference>
<dbReference type="SUPFAM" id="SSF81648">
    <property type="entry name" value="a domain/subunit of cytochrome bc1 complex (Ubiquinol-cytochrome c reductase)"/>
    <property type="match status" value="1"/>
</dbReference>
<dbReference type="SUPFAM" id="SSF81342">
    <property type="entry name" value="Transmembrane di-heme cytochromes"/>
    <property type="match status" value="1"/>
</dbReference>
<dbReference type="PROSITE" id="PS51003">
    <property type="entry name" value="CYTB_CTER"/>
    <property type="match status" value="1"/>
</dbReference>
<dbReference type="PROSITE" id="PS51002">
    <property type="entry name" value="CYTB_NTER"/>
    <property type="match status" value="1"/>
</dbReference>
<evidence type="ECO:0000250" key="1"/>
<evidence type="ECO:0000250" key="2">
    <source>
        <dbReference type="UniProtKB" id="P00157"/>
    </source>
</evidence>
<evidence type="ECO:0000255" key="3">
    <source>
        <dbReference type="PROSITE-ProRule" id="PRU00967"/>
    </source>
</evidence>
<evidence type="ECO:0000255" key="4">
    <source>
        <dbReference type="PROSITE-ProRule" id="PRU00968"/>
    </source>
</evidence>
<protein>
    <recommendedName>
        <fullName>Cytochrome b</fullName>
    </recommendedName>
    <alternativeName>
        <fullName>Complex III subunit 3</fullName>
    </alternativeName>
    <alternativeName>
        <fullName>Complex III subunit III</fullName>
    </alternativeName>
    <alternativeName>
        <fullName>Cytochrome b-c1 complex subunit 3</fullName>
    </alternativeName>
    <alternativeName>
        <fullName>Ubiquinol-cytochrome-c reductase complex cytochrome b subunit</fullName>
    </alternativeName>
</protein>
<comment type="function">
    <text evidence="2">Component of the ubiquinol-cytochrome c reductase complex (complex III or cytochrome b-c1 complex) that is part of the mitochondrial respiratory chain. The b-c1 complex mediates electron transfer from ubiquinol to cytochrome c. Contributes to the generation of a proton gradient across the mitochondrial membrane that is then used for ATP synthesis.</text>
</comment>
<comment type="cofactor">
    <cofactor evidence="2">
        <name>heme b</name>
        <dbReference type="ChEBI" id="CHEBI:60344"/>
    </cofactor>
    <text evidence="2">Binds 2 heme b groups non-covalently.</text>
</comment>
<comment type="subunit">
    <text evidence="2">The cytochrome bc1 complex contains 11 subunits: 3 respiratory subunits (MT-CYB, CYC1 and UQCRFS1), 2 core proteins (UQCRC1 and UQCRC2) and 6 low-molecular weight proteins (UQCRH/QCR6, UQCRB/QCR7, UQCRQ/QCR8, UQCR10/QCR9, UQCR11/QCR10 and a cleavage product of UQCRFS1). This cytochrome bc1 complex then forms a dimer.</text>
</comment>
<comment type="subcellular location">
    <subcellularLocation>
        <location evidence="2">Mitochondrion inner membrane</location>
        <topology evidence="2">Multi-pass membrane protein</topology>
    </subcellularLocation>
</comment>
<comment type="miscellaneous">
    <text evidence="1">Heme 1 (or BL or b562) is low-potential and absorbs at about 562 nm, and heme 2 (or BH or b566) is high-potential and absorbs at about 566 nm.</text>
</comment>
<comment type="similarity">
    <text evidence="3 4">Belongs to the cytochrome b family.</text>
</comment>
<comment type="caution">
    <text evidence="2">The full-length protein contains only eight transmembrane helices, not nine as predicted by bioinformatics tools.</text>
</comment>